<organism>
    <name type="scientific">Aromatoleum aromaticum (strain DSM 19018 / LMG 30748 / EbN1)</name>
    <name type="common">Azoarcus sp. (strain EbN1)</name>
    <dbReference type="NCBI Taxonomy" id="76114"/>
    <lineage>
        <taxon>Bacteria</taxon>
        <taxon>Pseudomonadati</taxon>
        <taxon>Pseudomonadota</taxon>
        <taxon>Betaproteobacteria</taxon>
        <taxon>Rhodocyclales</taxon>
        <taxon>Rhodocyclaceae</taxon>
        <taxon>Aromatoleum</taxon>
    </lineage>
</organism>
<accession>Q5P1H8</accession>
<reference key="1">
    <citation type="journal article" date="2005" name="Arch. Microbiol.">
        <title>The genome sequence of an anaerobic aromatic-degrading denitrifying bacterium, strain EbN1.</title>
        <authorList>
            <person name="Rabus R."/>
            <person name="Kube M."/>
            <person name="Heider J."/>
            <person name="Beck A."/>
            <person name="Heitmann K."/>
            <person name="Widdel F."/>
            <person name="Reinhardt R."/>
        </authorList>
    </citation>
    <scope>NUCLEOTIDE SEQUENCE [LARGE SCALE GENOMIC DNA]</scope>
    <source>
        <strain>DSM 19018 / LMG 30748 / EbN1</strain>
    </source>
</reference>
<proteinExistence type="inferred from homology"/>
<gene>
    <name evidence="1" type="primary">cysS</name>
    <name type="ordered locus">AZOSEA27110</name>
    <name type="ORF">ebA4792</name>
</gene>
<evidence type="ECO:0000255" key="1">
    <source>
        <dbReference type="HAMAP-Rule" id="MF_00041"/>
    </source>
</evidence>
<keyword id="KW-0030">Aminoacyl-tRNA synthetase</keyword>
<keyword id="KW-0067">ATP-binding</keyword>
<keyword id="KW-0963">Cytoplasm</keyword>
<keyword id="KW-0436">Ligase</keyword>
<keyword id="KW-0479">Metal-binding</keyword>
<keyword id="KW-0547">Nucleotide-binding</keyword>
<keyword id="KW-0648">Protein biosynthesis</keyword>
<keyword id="KW-1185">Reference proteome</keyword>
<keyword id="KW-0862">Zinc</keyword>
<comment type="catalytic activity">
    <reaction evidence="1">
        <text>tRNA(Cys) + L-cysteine + ATP = L-cysteinyl-tRNA(Cys) + AMP + diphosphate</text>
        <dbReference type="Rhea" id="RHEA:17773"/>
        <dbReference type="Rhea" id="RHEA-COMP:9661"/>
        <dbReference type="Rhea" id="RHEA-COMP:9679"/>
        <dbReference type="ChEBI" id="CHEBI:30616"/>
        <dbReference type="ChEBI" id="CHEBI:33019"/>
        <dbReference type="ChEBI" id="CHEBI:35235"/>
        <dbReference type="ChEBI" id="CHEBI:78442"/>
        <dbReference type="ChEBI" id="CHEBI:78517"/>
        <dbReference type="ChEBI" id="CHEBI:456215"/>
        <dbReference type="EC" id="6.1.1.16"/>
    </reaction>
</comment>
<comment type="cofactor">
    <cofactor evidence="1">
        <name>Zn(2+)</name>
        <dbReference type="ChEBI" id="CHEBI:29105"/>
    </cofactor>
    <text evidence="1">Binds 1 zinc ion per subunit.</text>
</comment>
<comment type="subunit">
    <text evidence="1">Monomer.</text>
</comment>
<comment type="subcellular location">
    <subcellularLocation>
        <location evidence="1">Cytoplasm</location>
    </subcellularLocation>
</comment>
<comment type="similarity">
    <text evidence="1">Belongs to the class-I aminoacyl-tRNA synthetase family.</text>
</comment>
<protein>
    <recommendedName>
        <fullName evidence="1">Cysteine--tRNA ligase</fullName>
        <ecNumber evidence="1">6.1.1.16</ecNumber>
    </recommendedName>
    <alternativeName>
        <fullName evidence="1">Cysteinyl-tRNA synthetase</fullName>
        <shortName evidence="1">CysRS</shortName>
    </alternativeName>
</protein>
<sequence>MLHIHNTLTRRKEAFVPIAPGKVRMYVCGMTVYDYCHLGHARVMVVFDMVARWLRASGFELTYVRNITDIDDKIIRRAGEKGESIRTLTDRFIAAMHEDADALGVLRPDHEPRATEYVMQMQSLIGRLRDKGLAYVAGNRDVCYSVRKFDSYGRFSGKSLDELRAGERVEVAGDKQDPLDFVLWKHARTDEPDEVKWASPWGAGRPGWHIECSAMSSDLLGEQFDIHGGGQDLQFPHHENEIAQSEGAHGHTFVNYWMHNGFVRVDDEKMSKSLGNFFTIRDVLERFDPEVVRFFILRAHYRSPLNYSDAHLEDARQALTRLYTALRNVQPSDAQVDWDEPHAMRFRAAMDDDFNTAEAVAVLFELANEANRSGSAATAAQLKGLGGVLGLLAREPASFLQGRMAGEPDKGEGVAIESMIERRALAKKSKDYAEADRIRAQLLASGIVLEDTPHGTVWRRA</sequence>
<feature type="chain" id="PRO_0000159342" description="Cysteine--tRNA ligase">
    <location>
        <begin position="1"/>
        <end position="461"/>
    </location>
</feature>
<feature type="short sequence motif" description="'HIGH' region">
    <location>
        <begin position="30"/>
        <end position="40"/>
    </location>
</feature>
<feature type="short sequence motif" description="'KMSKS' region">
    <location>
        <begin position="269"/>
        <end position="273"/>
    </location>
</feature>
<feature type="binding site" evidence="1">
    <location>
        <position position="28"/>
    </location>
    <ligand>
        <name>Zn(2+)</name>
        <dbReference type="ChEBI" id="CHEBI:29105"/>
    </ligand>
</feature>
<feature type="binding site" evidence="1">
    <location>
        <position position="212"/>
    </location>
    <ligand>
        <name>Zn(2+)</name>
        <dbReference type="ChEBI" id="CHEBI:29105"/>
    </ligand>
</feature>
<feature type="binding site" evidence="1">
    <location>
        <position position="237"/>
    </location>
    <ligand>
        <name>Zn(2+)</name>
        <dbReference type="ChEBI" id="CHEBI:29105"/>
    </ligand>
</feature>
<feature type="binding site" evidence="1">
    <location>
        <position position="241"/>
    </location>
    <ligand>
        <name>Zn(2+)</name>
        <dbReference type="ChEBI" id="CHEBI:29105"/>
    </ligand>
</feature>
<feature type="binding site" evidence="1">
    <location>
        <position position="272"/>
    </location>
    <ligand>
        <name>ATP</name>
        <dbReference type="ChEBI" id="CHEBI:30616"/>
    </ligand>
</feature>
<name>SYC_AROAE</name>
<dbReference type="EC" id="6.1.1.16" evidence="1"/>
<dbReference type="EMBL" id="CR555306">
    <property type="protein sequence ID" value="CAI08836.1"/>
    <property type="molecule type" value="Genomic_DNA"/>
</dbReference>
<dbReference type="RefSeq" id="WP_011238519.1">
    <property type="nucleotide sequence ID" value="NC_006513.1"/>
</dbReference>
<dbReference type="SMR" id="Q5P1H8"/>
<dbReference type="STRING" id="76114.ebA4792"/>
<dbReference type="KEGG" id="eba:ebA4792"/>
<dbReference type="eggNOG" id="COG0215">
    <property type="taxonomic scope" value="Bacteria"/>
</dbReference>
<dbReference type="HOGENOM" id="CLU_013528_0_1_4"/>
<dbReference type="OrthoDB" id="9815130at2"/>
<dbReference type="Proteomes" id="UP000006552">
    <property type="component" value="Chromosome"/>
</dbReference>
<dbReference type="GO" id="GO:0005829">
    <property type="term" value="C:cytosol"/>
    <property type="evidence" value="ECO:0007669"/>
    <property type="project" value="TreeGrafter"/>
</dbReference>
<dbReference type="GO" id="GO:0005524">
    <property type="term" value="F:ATP binding"/>
    <property type="evidence" value="ECO:0007669"/>
    <property type="project" value="UniProtKB-UniRule"/>
</dbReference>
<dbReference type="GO" id="GO:0004817">
    <property type="term" value="F:cysteine-tRNA ligase activity"/>
    <property type="evidence" value="ECO:0007669"/>
    <property type="project" value="UniProtKB-UniRule"/>
</dbReference>
<dbReference type="GO" id="GO:0008270">
    <property type="term" value="F:zinc ion binding"/>
    <property type="evidence" value="ECO:0007669"/>
    <property type="project" value="UniProtKB-UniRule"/>
</dbReference>
<dbReference type="GO" id="GO:0006423">
    <property type="term" value="P:cysteinyl-tRNA aminoacylation"/>
    <property type="evidence" value="ECO:0007669"/>
    <property type="project" value="UniProtKB-UniRule"/>
</dbReference>
<dbReference type="CDD" id="cd07963">
    <property type="entry name" value="Anticodon_Ia_Cys"/>
    <property type="match status" value="1"/>
</dbReference>
<dbReference type="CDD" id="cd00672">
    <property type="entry name" value="CysRS_core"/>
    <property type="match status" value="1"/>
</dbReference>
<dbReference type="FunFam" id="3.40.50.620:FF:000009">
    <property type="entry name" value="Cysteine--tRNA ligase"/>
    <property type="match status" value="1"/>
</dbReference>
<dbReference type="Gene3D" id="1.20.120.1910">
    <property type="entry name" value="Cysteine-tRNA ligase, C-terminal anti-codon recognition domain"/>
    <property type="match status" value="1"/>
</dbReference>
<dbReference type="Gene3D" id="3.40.50.620">
    <property type="entry name" value="HUPs"/>
    <property type="match status" value="1"/>
</dbReference>
<dbReference type="HAMAP" id="MF_00041">
    <property type="entry name" value="Cys_tRNA_synth"/>
    <property type="match status" value="1"/>
</dbReference>
<dbReference type="InterPro" id="IPR015803">
    <property type="entry name" value="Cys-tRNA-ligase"/>
</dbReference>
<dbReference type="InterPro" id="IPR015273">
    <property type="entry name" value="Cys-tRNA-synt_Ia_DALR"/>
</dbReference>
<dbReference type="InterPro" id="IPR024909">
    <property type="entry name" value="Cys-tRNA/MSH_ligase"/>
</dbReference>
<dbReference type="InterPro" id="IPR056411">
    <property type="entry name" value="CysS_C"/>
</dbReference>
<dbReference type="InterPro" id="IPR014729">
    <property type="entry name" value="Rossmann-like_a/b/a_fold"/>
</dbReference>
<dbReference type="InterPro" id="IPR032678">
    <property type="entry name" value="tRNA-synt_1_cat_dom"/>
</dbReference>
<dbReference type="InterPro" id="IPR009080">
    <property type="entry name" value="tRNAsynth_Ia_anticodon-bd"/>
</dbReference>
<dbReference type="NCBIfam" id="TIGR00435">
    <property type="entry name" value="cysS"/>
    <property type="match status" value="1"/>
</dbReference>
<dbReference type="PANTHER" id="PTHR10890:SF3">
    <property type="entry name" value="CYSTEINE--TRNA LIGASE, CYTOPLASMIC"/>
    <property type="match status" value="1"/>
</dbReference>
<dbReference type="PANTHER" id="PTHR10890">
    <property type="entry name" value="CYSTEINYL-TRNA SYNTHETASE"/>
    <property type="match status" value="1"/>
</dbReference>
<dbReference type="Pfam" id="PF23493">
    <property type="entry name" value="CysS_C"/>
    <property type="match status" value="1"/>
</dbReference>
<dbReference type="Pfam" id="PF09190">
    <property type="entry name" value="DALR_2"/>
    <property type="match status" value="1"/>
</dbReference>
<dbReference type="Pfam" id="PF01406">
    <property type="entry name" value="tRNA-synt_1e"/>
    <property type="match status" value="1"/>
</dbReference>
<dbReference type="PRINTS" id="PR00983">
    <property type="entry name" value="TRNASYNTHCYS"/>
</dbReference>
<dbReference type="SMART" id="SM00840">
    <property type="entry name" value="DALR_2"/>
    <property type="match status" value="1"/>
</dbReference>
<dbReference type="SUPFAM" id="SSF47323">
    <property type="entry name" value="Anticodon-binding domain of a subclass of class I aminoacyl-tRNA synthetases"/>
    <property type="match status" value="1"/>
</dbReference>
<dbReference type="SUPFAM" id="SSF52374">
    <property type="entry name" value="Nucleotidylyl transferase"/>
    <property type="match status" value="1"/>
</dbReference>